<comment type="function">
    <text evidence="1">Catalyzes the reversible transfer of the terminal phosphate group between ATP and AMP. Plays an important role in cellular energy homeostasis and in adenine nucleotide metabolism.</text>
</comment>
<comment type="catalytic activity">
    <reaction evidence="1">
        <text>AMP + ATP = 2 ADP</text>
        <dbReference type="Rhea" id="RHEA:12973"/>
        <dbReference type="ChEBI" id="CHEBI:30616"/>
        <dbReference type="ChEBI" id="CHEBI:456215"/>
        <dbReference type="ChEBI" id="CHEBI:456216"/>
        <dbReference type="EC" id="2.7.4.3"/>
    </reaction>
</comment>
<comment type="pathway">
    <text evidence="1">Purine metabolism; AMP biosynthesis via salvage pathway; AMP from ADP: step 1/1.</text>
</comment>
<comment type="subunit">
    <text evidence="1">Monomer.</text>
</comment>
<comment type="subcellular location">
    <subcellularLocation>
        <location evidence="1">Cytoplasm</location>
    </subcellularLocation>
</comment>
<comment type="domain">
    <text evidence="1">Consists of three domains, a large central CORE domain and two small peripheral domains, NMPbind and LID, which undergo movements during catalysis. The LID domain closes over the site of phosphoryl transfer upon ATP binding. Assembling and dissambling the active center during each catalytic cycle provides an effective means to prevent ATP hydrolysis.</text>
</comment>
<comment type="similarity">
    <text evidence="1">Belongs to the adenylate kinase family.</text>
</comment>
<dbReference type="EC" id="2.7.4.3" evidence="1"/>
<dbReference type="EMBL" id="CP001322">
    <property type="protein sequence ID" value="ACL01911.1"/>
    <property type="molecule type" value="Genomic_DNA"/>
</dbReference>
<dbReference type="RefSeq" id="WP_012609351.1">
    <property type="nucleotide sequence ID" value="NC_011768.1"/>
</dbReference>
<dbReference type="SMR" id="B8FMP4"/>
<dbReference type="KEGG" id="dal:Dalk_0202"/>
<dbReference type="eggNOG" id="COG0563">
    <property type="taxonomic scope" value="Bacteria"/>
</dbReference>
<dbReference type="HOGENOM" id="CLU_032354_1_2_7"/>
<dbReference type="UniPathway" id="UPA00588">
    <property type="reaction ID" value="UER00649"/>
</dbReference>
<dbReference type="Proteomes" id="UP000000739">
    <property type="component" value="Chromosome"/>
</dbReference>
<dbReference type="GO" id="GO:0005737">
    <property type="term" value="C:cytoplasm"/>
    <property type="evidence" value="ECO:0007669"/>
    <property type="project" value="UniProtKB-SubCell"/>
</dbReference>
<dbReference type="GO" id="GO:0004017">
    <property type="term" value="F:adenylate kinase activity"/>
    <property type="evidence" value="ECO:0007669"/>
    <property type="project" value="UniProtKB-UniRule"/>
</dbReference>
<dbReference type="GO" id="GO:0005524">
    <property type="term" value="F:ATP binding"/>
    <property type="evidence" value="ECO:0007669"/>
    <property type="project" value="UniProtKB-UniRule"/>
</dbReference>
<dbReference type="GO" id="GO:0044209">
    <property type="term" value="P:AMP salvage"/>
    <property type="evidence" value="ECO:0007669"/>
    <property type="project" value="UniProtKB-UniRule"/>
</dbReference>
<dbReference type="CDD" id="cd01428">
    <property type="entry name" value="ADK"/>
    <property type="match status" value="1"/>
</dbReference>
<dbReference type="Gene3D" id="3.40.50.300">
    <property type="entry name" value="P-loop containing nucleotide triphosphate hydrolases"/>
    <property type="match status" value="1"/>
</dbReference>
<dbReference type="HAMAP" id="MF_00235">
    <property type="entry name" value="Adenylate_kinase_Adk"/>
    <property type="match status" value="1"/>
</dbReference>
<dbReference type="InterPro" id="IPR006259">
    <property type="entry name" value="Adenyl_kin_sub"/>
</dbReference>
<dbReference type="InterPro" id="IPR000850">
    <property type="entry name" value="Adenylat/UMP-CMP_kin"/>
</dbReference>
<dbReference type="InterPro" id="IPR033690">
    <property type="entry name" value="Adenylat_kinase_CS"/>
</dbReference>
<dbReference type="InterPro" id="IPR027417">
    <property type="entry name" value="P-loop_NTPase"/>
</dbReference>
<dbReference type="NCBIfam" id="TIGR01351">
    <property type="entry name" value="adk"/>
    <property type="match status" value="1"/>
</dbReference>
<dbReference type="NCBIfam" id="NF011102">
    <property type="entry name" value="PRK14529.1"/>
    <property type="match status" value="1"/>
</dbReference>
<dbReference type="PANTHER" id="PTHR23359">
    <property type="entry name" value="NUCLEOTIDE KINASE"/>
    <property type="match status" value="1"/>
</dbReference>
<dbReference type="Pfam" id="PF00406">
    <property type="entry name" value="ADK"/>
    <property type="match status" value="1"/>
</dbReference>
<dbReference type="PRINTS" id="PR00094">
    <property type="entry name" value="ADENYLTKNASE"/>
</dbReference>
<dbReference type="SUPFAM" id="SSF52540">
    <property type="entry name" value="P-loop containing nucleoside triphosphate hydrolases"/>
    <property type="match status" value="1"/>
</dbReference>
<dbReference type="PROSITE" id="PS00113">
    <property type="entry name" value="ADENYLATE_KINASE"/>
    <property type="match status" value="1"/>
</dbReference>
<organism>
    <name type="scientific">Desulfatibacillum aliphaticivorans</name>
    <dbReference type="NCBI Taxonomy" id="218208"/>
    <lineage>
        <taxon>Bacteria</taxon>
        <taxon>Pseudomonadati</taxon>
        <taxon>Thermodesulfobacteriota</taxon>
        <taxon>Desulfobacteria</taxon>
        <taxon>Desulfobacterales</taxon>
        <taxon>Desulfatibacillaceae</taxon>
        <taxon>Desulfatibacillum</taxon>
    </lineage>
</organism>
<gene>
    <name evidence="1" type="primary">adk</name>
    <name type="ordered locus">Dalk_0202</name>
</gene>
<accession>B8FMP4</accession>
<reference key="1">
    <citation type="journal article" date="2012" name="Environ. Microbiol.">
        <title>The genome sequence of Desulfatibacillum alkenivorans AK-01: a blueprint for anaerobic alkane oxidation.</title>
        <authorList>
            <person name="Callaghan A.V."/>
            <person name="Morris B.E."/>
            <person name="Pereira I.A."/>
            <person name="McInerney M.J."/>
            <person name="Austin R.N."/>
            <person name="Groves J.T."/>
            <person name="Kukor J.J."/>
            <person name="Suflita J.M."/>
            <person name="Young L.Y."/>
            <person name="Zylstra G.J."/>
            <person name="Wawrik B."/>
        </authorList>
    </citation>
    <scope>NUCLEOTIDE SEQUENCE [LARGE SCALE GENOMIC DNA]</scope>
    <source>
        <strain>AK-01</strain>
    </source>
</reference>
<protein>
    <recommendedName>
        <fullName evidence="1">Adenylate kinase</fullName>
        <shortName evidence="1">AK</shortName>
        <ecNumber evidence="1">2.7.4.3</ecNumber>
    </recommendedName>
    <alternativeName>
        <fullName evidence="1">ATP-AMP transphosphorylase</fullName>
    </alternativeName>
    <alternativeName>
        <fullName evidence="1">ATP:AMP phosphotransferase</fullName>
    </alternativeName>
    <alternativeName>
        <fullName evidence="1">Adenylate monophosphate kinase</fullName>
    </alternativeName>
</protein>
<evidence type="ECO:0000255" key="1">
    <source>
        <dbReference type="HAMAP-Rule" id="MF_00235"/>
    </source>
</evidence>
<keyword id="KW-0067">ATP-binding</keyword>
<keyword id="KW-0963">Cytoplasm</keyword>
<keyword id="KW-0418">Kinase</keyword>
<keyword id="KW-0545">Nucleotide biosynthesis</keyword>
<keyword id="KW-0547">Nucleotide-binding</keyword>
<keyword id="KW-1185">Reference proteome</keyword>
<keyword id="KW-0808">Transferase</keyword>
<name>KAD_DESAL</name>
<sequence>MRILFFGPNGSGKGTQGSIVKGKYNIPHIESGAIFRENISKGTEIGKKAKEYIDRGDLVPDEITIPMILGRLQADDCGNGWLLDGFPRSKEQAIKLDEALKEAGMALDVVIEMILDRQIAKNRIMGRRLCENDNNHPNNIFIDAIKPDGDKCRVCGGALSARSDDQDEDAIDKRHNIYYDTDTGTLASAYYFKAIAEKDGSVKYITLNGEPSVPEVTDELVGKLG</sequence>
<proteinExistence type="inferred from homology"/>
<feature type="chain" id="PRO_1000118986" description="Adenylate kinase">
    <location>
        <begin position="1"/>
        <end position="225"/>
    </location>
</feature>
<feature type="region of interest" description="NMP" evidence="1">
    <location>
        <begin position="30"/>
        <end position="59"/>
    </location>
</feature>
<feature type="region of interest" description="LID" evidence="1">
    <location>
        <begin position="126"/>
        <end position="165"/>
    </location>
</feature>
<feature type="binding site" evidence="1">
    <location>
        <begin position="10"/>
        <end position="15"/>
    </location>
    <ligand>
        <name>ATP</name>
        <dbReference type="ChEBI" id="CHEBI:30616"/>
    </ligand>
</feature>
<feature type="binding site" evidence="1">
    <location>
        <position position="31"/>
    </location>
    <ligand>
        <name>AMP</name>
        <dbReference type="ChEBI" id="CHEBI:456215"/>
    </ligand>
</feature>
<feature type="binding site" evidence="1">
    <location>
        <position position="36"/>
    </location>
    <ligand>
        <name>AMP</name>
        <dbReference type="ChEBI" id="CHEBI:456215"/>
    </ligand>
</feature>
<feature type="binding site" evidence="1">
    <location>
        <begin position="57"/>
        <end position="59"/>
    </location>
    <ligand>
        <name>AMP</name>
        <dbReference type="ChEBI" id="CHEBI:456215"/>
    </ligand>
</feature>
<feature type="binding site" evidence="1">
    <location>
        <begin position="85"/>
        <end position="88"/>
    </location>
    <ligand>
        <name>AMP</name>
        <dbReference type="ChEBI" id="CHEBI:456215"/>
    </ligand>
</feature>
<feature type="binding site" evidence="1">
    <location>
        <position position="92"/>
    </location>
    <ligand>
        <name>AMP</name>
        <dbReference type="ChEBI" id="CHEBI:456215"/>
    </ligand>
</feature>
<feature type="binding site" evidence="1">
    <location>
        <position position="127"/>
    </location>
    <ligand>
        <name>ATP</name>
        <dbReference type="ChEBI" id="CHEBI:30616"/>
    </ligand>
</feature>
<feature type="binding site" evidence="1">
    <location>
        <position position="162"/>
    </location>
    <ligand>
        <name>AMP</name>
        <dbReference type="ChEBI" id="CHEBI:456215"/>
    </ligand>
</feature>
<feature type="binding site" evidence="1">
    <location>
        <position position="174"/>
    </location>
    <ligand>
        <name>AMP</name>
        <dbReference type="ChEBI" id="CHEBI:456215"/>
    </ligand>
</feature>
<feature type="binding site" evidence="1">
    <location>
        <position position="211"/>
    </location>
    <ligand>
        <name>ATP</name>
        <dbReference type="ChEBI" id="CHEBI:30616"/>
    </ligand>
</feature>